<comment type="function">
    <text evidence="1 2">Intramembrane glycolipid transporter that operates in the biosynthetic pathway of dolichol-linked oligosaccharides, the glycan precursors employed in protein asparagine (N)-glycosylation. The sequential addition of sugars to dolichol pyrophosphate produces dolichol-linked oligosaccharides containing fourteen sugars, including two GlcNAcs, nine mannoses and three glucoses. Once assembled, the oligosaccharide is transferred from the lipid to nascent proteins by oligosaccharyltransferases. The assembly of dolichol-linked oligosaccharides begins on the cytosolic side of the endoplasmic reticulum membrane and finishes in its lumen. RFT1 could mediate the translocation of the cytosolically oriented intermediate DolPP-GlcNAc2Man5, produced by ALG11, into the ER lumen where dolichol-linked oligosaccharides assembly continues (By similarity). However, the intramembrane lipid transporter activity could not be confirmed in vitro (By similarity).</text>
</comment>
<comment type="pathway">
    <text evidence="2">Protein modification; protein glycosylation.</text>
</comment>
<comment type="subcellular location">
    <subcellularLocation>
        <location evidence="1">Endoplasmic reticulum membrane</location>
        <topology evidence="3">Multi-pass membrane protein</topology>
    </subcellularLocation>
</comment>
<comment type="similarity">
    <text evidence="4">Belongs to the RFT1 family.</text>
</comment>
<keyword id="KW-0256">Endoplasmic reticulum</keyword>
<keyword id="KW-0472">Membrane</keyword>
<keyword id="KW-1185">Reference proteome</keyword>
<keyword id="KW-0762">Sugar transport</keyword>
<keyword id="KW-0812">Transmembrane</keyword>
<keyword id="KW-1133">Transmembrane helix</keyword>
<keyword id="KW-0813">Transport</keyword>
<feature type="chain" id="PRO_0000311288" description="Man(5)GlcNAc(2)-PP-dolichol translocation protein RFT1">
    <location>
        <begin position="1"/>
        <end position="539"/>
    </location>
</feature>
<feature type="transmembrane region" description="Helical" evidence="3">
    <location>
        <begin position="16"/>
        <end position="36"/>
    </location>
</feature>
<feature type="transmembrane region" description="Helical" evidence="3">
    <location>
        <begin position="42"/>
        <end position="62"/>
    </location>
</feature>
<feature type="transmembrane region" description="Helical" evidence="3">
    <location>
        <begin position="85"/>
        <end position="105"/>
    </location>
</feature>
<feature type="transmembrane region" description="Helical" evidence="3">
    <location>
        <begin position="121"/>
        <end position="141"/>
    </location>
</feature>
<feature type="transmembrane region" description="Helical" evidence="3">
    <location>
        <begin position="168"/>
        <end position="188"/>
    </location>
</feature>
<feature type="transmembrane region" description="Helical" evidence="3">
    <location>
        <begin position="189"/>
        <end position="207"/>
    </location>
</feature>
<feature type="transmembrane region" description="Helical" evidence="3">
    <location>
        <begin position="283"/>
        <end position="303"/>
    </location>
</feature>
<feature type="transmembrane region" description="Helical" evidence="3">
    <location>
        <begin position="334"/>
        <end position="354"/>
    </location>
</feature>
<feature type="transmembrane region" description="Helical" evidence="3">
    <location>
        <begin position="376"/>
        <end position="396"/>
    </location>
</feature>
<feature type="transmembrane region" description="Helical" evidence="3">
    <location>
        <begin position="412"/>
        <end position="432"/>
    </location>
</feature>
<feature type="transmembrane region" description="Helical" evidence="3">
    <location>
        <begin position="433"/>
        <end position="449"/>
    </location>
</feature>
<feature type="transmembrane region" description="Helical" evidence="3">
    <location>
        <begin position="460"/>
        <end position="480"/>
    </location>
</feature>
<feature type="transmembrane region" description="Helical" evidence="3">
    <location>
        <begin position="494"/>
        <end position="514"/>
    </location>
</feature>
<reference key="1">
    <citation type="submission" date="2006-08" db="EMBL/GenBank/DDBJ databases">
        <authorList>
            <consortium name="NIH - Xenopus Gene Collection (XGC) project"/>
        </authorList>
    </citation>
    <scope>NUCLEOTIDE SEQUENCE [LARGE SCALE MRNA]</scope>
    <source>
        <tissue>Brain</tissue>
    </source>
</reference>
<organism>
    <name type="scientific">Xenopus tropicalis</name>
    <name type="common">Western clawed frog</name>
    <name type="synonym">Silurana tropicalis</name>
    <dbReference type="NCBI Taxonomy" id="8364"/>
    <lineage>
        <taxon>Eukaryota</taxon>
        <taxon>Metazoa</taxon>
        <taxon>Chordata</taxon>
        <taxon>Craniata</taxon>
        <taxon>Vertebrata</taxon>
        <taxon>Euteleostomi</taxon>
        <taxon>Amphibia</taxon>
        <taxon>Batrachia</taxon>
        <taxon>Anura</taxon>
        <taxon>Pipoidea</taxon>
        <taxon>Pipidae</taxon>
        <taxon>Xenopodinae</taxon>
        <taxon>Xenopus</taxon>
        <taxon>Silurana</taxon>
    </lineage>
</organism>
<name>RFT1_XENTR</name>
<gene>
    <name type="primary">rft1</name>
</gene>
<proteinExistence type="evidence at transcript level"/>
<accession>Q0D2E8</accession>
<dbReference type="EMBL" id="BC121860">
    <property type="protein sequence ID" value="AAI21861.1"/>
    <property type="molecule type" value="mRNA"/>
</dbReference>
<dbReference type="RefSeq" id="NP_001072828.1">
    <property type="nucleotide sequence ID" value="NM_001079360.1"/>
</dbReference>
<dbReference type="SMR" id="Q0D2E8"/>
<dbReference type="FunCoup" id="Q0D2E8">
    <property type="interactions" value="1673"/>
</dbReference>
<dbReference type="STRING" id="8364.ENSXETP00000008931"/>
<dbReference type="PaxDb" id="8364-ENSXETP00000060331"/>
<dbReference type="DNASU" id="780289"/>
<dbReference type="GeneID" id="780289"/>
<dbReference type="KEGG" id="xtr:780289"/>
<dbReference type="AGR" id="Xenbase:XB-GENE-1015143"/>
<dbReference type="CTD" id="91869"/>
<dbReference type="Xenbase" id="XB-GENE-1015143">
    <property type="gene designation" value="rft1"/>
</dbReference>
<dbReference type="eggNOG" id="KOG2864">
    <property type="taxonomic scope" value="Eukaryota"/>
</dbReference>
<dbReference type="HOGENOM" id="CLU_023360_5_0_1"/>
<dbReference type="InParanoid" id="Q0D2E8"/>
<dbReference type="OMA" id="WPGKLFG"/>
<dbReference type="OrthoDB" id="9979195at2759"/>
<dbReference type="PhylomeDB" id="Q0D2E8"/>
<dbReference type="TreeFam" id="TF313129"/>
<dbReference type="UniPathway" id="UPA00378"/>
<dbReference type="Proteomes" id="UP000008143">
    <property type="component" value="Chromosome 4"/>
</dbReference>
<dbReference type="Bgee" id="ENSXETG00000031244">
    <property type="expression patterns" value="Expressed in egg cell and 11 other cell types or tissues"/>
</dbReference>
<dbReference type="GO" id="GO:0005789">
    <property type="term" value="C:endoplasmic reticulum membrane"/>
    <property type="evidence" value="ECO:0007669"/>
    <property type="project" value="UniProtKB-SubCell"/>
</dbReference>
<dbReference type="GO" id="GO:0006488">
    <property type="term" value="P:dolichol-linked oligosaccharide biosynthetic process"/>
    <property type="evidence" value="ECO:0000250"/>
    <property type="project" value="UniProtKB"/>
</dbReference>
<dbReference type="GO" id="GO:0034203">
    <property type="term" value="P:glycolipid translocation"/>
    <property type="evidence" value="ECO:0000250"/>
    <property type="project" value="UniProtKB"/>
</dbReference>
<dbReference type="GO" id="GO:0006487">
    <property type="term" value="P:protein N-linked glycosylation"/>
    <property type="evidence" value="ECO:0000250"/>
    <property type="project" value="UniProtKB"/>
</dbReference>
<dbReference type="InterPro" id="IPR007594">
    <property type="entry name" value="RFT1"/>
</dbReference>
<dbReference type="PANTHER" id="PTHR13117">
    <property type="entry name" value="ENDOPLASMIC RETICULUM MULTISPAN TRANSMEMBRANE PROTEIN-RELATED"/>
    <property type="match status" value="1"/>
</dbReference>
<dbReference type="PANTHER" id="PTHR13117:SF5">
    <property type="entry name" value="PROTEIN RFT1 HOMOLOG"/>
    <property type="match status" value="1"/>
</dbReference>
<dbReference type="Pfam" id="PF04506">
    <property type="entry name" value="Rft-1"/>
    <property type="match status" value="1"/>
</dbReference>
<sequence length="539" mass="60808">MGSQEVLMDATKLASYSVILQILFRVLTFALNAFTLRYVSKEIIGIVNVRLTLFYTTVVFLAREAFRRACLSHSAQQSWRHTIHLTWLAVPLGICWSFILGWIWLQILEVPEPEAIPYYNIGVWAFGFSAVVELLAEPFWVLAQAHLFVKLKVVAESLAIIIRCSVTVILVLLCPQWGLLIFSLAQVLYTSALALCYIAYFARFLGSLEAEKKPFPLRRMREFLPRFSSSQAFLDWKQAWLAWSFFKQSFLKQILTEGERYVMTFLNVLSFGDQGVYDIVNNLGSLVARFIFLPIEESFYVFFAKVLERGKKVQSQRKEEISMASEVLESLLKLVTLIGLVIIAFGYAYSHLALDIYGGSMLSGGSGPVLLRCYCLYVLLLAINGVTECFTFASMGKEDVDRYNYVMLGLSLSFLCLSYYMTLWLGSVGFILANCFNMGLRITHSLLYIMRYYKGSPYQPLIGLLPSPVVVCVLAVSAAVTGYSEVALCCDKGWLLCLGHIVVGGLCLLVTLGAAVLSEKKLTHFIRSHLLSRHQRKEQ</sequence>
<protein>
    <recommendedName>
        <fullName evidence="2">Man(5)GlcNAc(2)-PP-dolichol translocation protein RFT1</fullName>
    </recommendedName>
    <alternativeName>
        <fullName evidence="2">Protein RFT1 homolog</fullName>
    </alternativeName>
</protein>
<evidence type="ECO:0000250" key="1">
    <source>
        <dbReference type="UniProtKB" id="P38206"/>
    </source>
</evidence>
<evidence type="ECO:0000250" key="2">
    <source>
        <dbReference type="UniProtKB" id="Q96AA3"/>
    </source>
</evidence>
<evidence type="ECO:0000255" key="3"/>
<evidence type="ECO:0000305" key="4"/>